<sequence length="331" mass="36915">MKAYAVPFEKYVNLADARLGTRAISVTDDWFADVNRLFQPTPAVWKEGVFDDNGKWMDGWESRRKRFEGYDHAVIRLGVPGWIKGVDIDTSFFTGNYPPSASLEACFVADGDPSDATVWTEILPAVELKGNSHHYHEIAFDKPVSHLRFNIYPDGGVARLRVHGIPYRDWSSVGHNEQVDLAAALNGGRALACSDEHFGRMSNILNPNRGENMGDGWETARRRTPGNDWVIVALGHPGEIERVVVDTLHFKGNYPDSCSIQAAYVKGGTDSQIETQSLFWRELLPSQKLSMHAEHEFAGQIAKLGPVTHVRLNIFPDGGVSRLRLFGKVVK</sequence>
<dbReference type="EC" id="3.5.3.4" evidence="1"/>
<dbReference type="EMBL" id="CP000304">
    <property type="protein sequence ID" value="ABP80733.1"/>
    <property type="molecule type" value="Genomic_DNA"/>
</dbReference>
<dbReference type="RefSeq" id="WP_011914186.1">
    <property type="nucleotide sequence ID" value="NC_009434.1"/>
</dbReference>
<dbReference type="SMR" id="A4VP32"/>
<dbReference type="KEGG" id="psa:PST_3095"/>
<dbReference type="eggNOG" id="COG4266">
    <property type="taxonomic scope" value="Bacteria"/>
</dbReference>
<dbReference type="HOGENOM" id="CLU_038797_1_2_6"/>
<dbReference type="UniPathway" id="UPA00395">
    <property type="reaction ID" value="UER00654"/>
</dbReference>
<dbReference type="Proteomes" id="UP000000233">
    <property type="component" value="Chromosome"/>
</dbReference>
<dbReference type="GO" id="GO:0004037">
    <property type="term" value="F:allantoicase activity"/>
    <property type="evidence" value="ECO:0007669"/>
    <property type="project" value="UniProtKB-UniRule"/>
</dbReference>
<dbReference type="GO" id="GO:0000256">
    <property type="term" value="P:allantoin catabolic process"/>
    <property type="evidence" value="ECO:0007669"/>
    <property type="project" value="UniProtKB-UniRule"/>
</dbReference>
<dbReference type="GO" id="GO:0006144">
    <property type="term" value="P:purine nucleobase metabolic process"/>
    <property type="evidence" value="ECO:0007669"/>
    <property type="project" value="UniProtKB-KW"/>
</dbReference>
<dbReference type="FunFam" id="2.60.120.260:FF:000059">
    <property type="entry name" value="Probable allantoicase"/>
    <property type="match status" value="1"/>
</dbReference>
<dbReference type="FunFam" id="2.60.120.260:FF:000090">
    <property type="entry name" value="Probable allantoicase"/>
    <property type="match status" value="1"/>
</dbReference>
<dbReference type="Gene3D" id="2.60.120.260">
    <property type="entry name" value="Galactose-binding domain-like"/>
    <property type="match status" value="2"/>
</dbReference>
<dbReference type="HAMAP" id="MF_00813">
    <property type="entry name" value="Allantoicase"/>
    <property type="match status" value="1"/>
</dbReference>
<dbReference type="InterPro" id="IPR005164">
    <property type="entry name" value="Allantoicase"/>
</dbReference>
<dbReference type="InterPro" id="IPR015908">
    <property type="entry name" value="Allantoicase_dom"/>
</dbReference>
<dbReference type="InterPro" id="IPR008979">
    <property type="entry name" value="Galactose-bd-like_sf"/>
</dbReference>
<dbReference type="NCBIfam" id="TIGR02961">
    <property type="entry name" value="allantoicase"/>
    <property type="match status" value="1"/>
</dbReference>
<dbReference type="PANTHER" id="PTHR12045">
    <property type="entry name" value="ALLANTOICASE"/>
    <property type="match status" value="1"/>
</dbReference>
<dbReference type="PANTHER" id="PTHR12045:SF3">
    <property type="entry name" value="INACTIVE ALLANTOICASE-RELATED"/>
    <property type="match status" value="1"/>
</dbReference>
<dbReference type="Pfam" id="PF03561">
    <property type="entry name" value="Allantoicase"/>
    <property type="match status" value="2"/>
</dbReference>
<dbReference type="PIRSF" id="PIRSF016516">
    <property type="entry name" value="Allantoicase"/>
    <property type="match status" value="1"/>
</dbReference>
<dbReference type="SUPFAM" id="SSF49785">
    <property type="entry name" value="Galactose-binding domain-like"/>
    <property type="match status" value="2"/>
</dbReference>
<organism>
    <name type="scientific">Stutzerimonas stutzeri (strain A1501)</name>
    <name type="common">Pseudomonas stutzeri</name>
    <dbReference type="NCBI Taxonomy" id="379731"/>
    <lineage>
        <taxon>Bacteria</taxon>
        <taxon>Pseudomonadati</taxon>
        <taxon>Pseudomonadota</taxon>
        <taxon>Gammaproteobacteria</taxon>
        <taxon>Pseudomonadales</taxon>
        <taxon>Pseudomonadaceae</taxon>
        <taxon>Stutzerimonas</taxon>
    </lineage>
</organism>
<gene>
    <name evidence="1" type="primary">alc</name>
    <name type="ordered locus">PST_3095</name>
</gene>
<evidence type="ECO:0000255" key="1">
    <source>
        <dbReference type="HAMAP-Rule" id="MF_00813"/>
    </source>
</evidence>
<protein>
    <recommendedName>
        <fullName evidence="1">Probable allantoicase</fullName>
        <ecNumber evidence="1">3.5.3.4</ecNumber>
    </recommendedName>
    <alternativeName>
        <fullName evidence="1">Allantoate amidinohydrolase</fullName>
    </alternativeName>
</protein>
<comment type="catalytic activity">
    <reaction evidence="1">
        <text>allantoate + H2O = (S)-ureidoglycolate + urea</text>
        <dbReference type="Rhea" id="RHEA:11016"/>
        <dbReference type="ChEBI" id="CHEBI:15377"/>
        <dbReference type="ChEBI" id="CHEBI:16199"/>
        <dbReference type="ChEBI" id="CHEBI:17536"/>
        <dbReference type="ChEBI" id="CHEBI:57296"/>
        <dbReference type="EC" id="3.5.3.4"/>
    </reaction>
</comment>
<comment type="pathway">
    <text evidence="1">Nitrogen metabolism; (S)-allantoin degradation; (S)-ureidoglycolate from allantoate (aminidohydrolase route): step 1/1.</text>
</comment>
<comment type="similarity">
    <text evidence="1">Belongs to the allantoicase family.</text>
</comment>
<feature type="chain" id="PRO_1000062287" description="Probable allantoicase">
    <location>
        <begin position="1"/>
        <end position="331"/>
    </location>
</feature>
<keyword id="KW-0378">Hydrolase</keyword>
<keyword id="KW-0659">Purine metabolism</keyword>
<keyword id="KW-1185">Reference proteome</keyword>
<reference key="1">
    <citation type="journal article" date="2008" name="Proc. Natl. Acad. Sci. U.S.A.">
        <title>Nitrogen fixation island and rhizosphere competence traits in the genome of root-associated Pseudomonas stutzeri A1501.</title>
        <authorList>
            <person name="Yan Y."/>
            <person name="Yang J."/>
            <person name="Dou Y."/>
            <person name="Chen M."/>
            <person name="Ping S."/>
            <person name="Peng J."/>
            <person name="Lu W."/>
            <person name="Zhang W."/>
            <person name="Yao Z."/>
            <person name="Li H."/>
            <person name="Liu W."/>
            <person name="He S."/>
            <person name="Geng L."/>
            <person name="Zhang X."/>
            <person name="Yang F."/>
            <person name="Yu H."/>
            <person name="Zhan Y."/>
            <person name="Li D."/>
            <person name="Lin Z."/>
            <person name="Wang Y."/>
            <person name="Elmerich C."/>
            <person name="Lin M."/>
            <person name="Jin Q."/>
        </authorList>
    </citation>
    <scope>NUCLEOTIDE SEQUENCE [LARGE SCALE GENOMIC DNA]</scope>
    <source>
        <strain>A1501</strain>
    </source>
</reference>
<proteinExistence type="inferred from homology"/>
<name>ALLC_STUS1</name>
<accession>A4VP32</accession>